<protein>
    <recommendedName>
        <fullName>Virion-associated protein</fullName>
        <shortName>Vap</shortName>
    </recommendedName>
    <alternativeName>
        <fullName>Protein 3</fullName>
        <shortName>P3</shortName>
    </alternativeName>
</protein>
<accession>Q02967</accession>
<gene>
    <name type="ORF">ORF III</name>
</gene>
<keyword id="KW-0175">Coiled coil</keyword>
<keyword id="KW-1015">Disulfide bond</keyword>
<keyword id="KW-1031">Host cell junction</keyword>
<keyword id="KW-0946">Virion</keyword>
<comment type="function">
    <text evidence="1">Plays a role in virus cell-to-cell and plant-to-plant transmission. Interacts with virion icosahedral capsid and movement protein, thereby facilitating virion cell-to-cell transmission through plasmodesmata opened by viral movement protein. Also interacts with aphid transmission factor, attaching the virion to aphid stylet when the animal feeds on an virus infected plant. Aphid saliva may later detach the virion, inducing release of infectious particles when the animal feeds on a new plant (By similarity).</text>
</comment>
<comment type="subunit">
    <text evidence="1">Homotetramer, through coiled-coil domain. Homotrimer when interacts with icosehadral capsid. Interacts with capsid protein, and with Movement protein (By similarity).</text>
</comment>
<comment type="subcellular location">
    <subcellularLocation>
        <location evidence="1">Virion</location>
    </subcellularLocation>
    <subcellularLocation>
        <location>Host cell junction</location>
        <location>Host plasmodesma</location>
    </subcellularLocation>
</comment>
<comment type="similarity">
    <text evidence="2">Belongs to the caulimovirus ORF III family.</text>
</comment>
<proteinExistence type="inferred from homology"/>
<feature type="chain" id="PRO_0000222078" description="Virion-associated protein">
    <location>
        <begin position="1"/>
        <end position="129"/>
    </location>
</feature>
<feature type="region of interest" description="Capsid binding" evidence="1">
    <location>
        <begin position="122"/>
        <end position="129"/>
    </location>
</feature>
<feature type="coiled-coil region" evidence="1">
    <location>
        <begin position="1"/>
        <end position="31"/>
    </location>
</feature>
<feature type="coiled-coil region" evidence="1">
    <location>
        <begin position="38"/>
        <end position="59"/>
    </location>
</feature>
<feature type="disulfide bond" description="Interchain (with C-62 in multimeric partner 1)" evidence="1">
    <location>
        <position position="60"/>
    </location>
</feature>
<feature type="disulfide bond" description="Interchain (with C-60 in multimeric partner 2)" evidence="1">
    <location>
        <position position="62"/>
    </location>
</feature>
<organismHost>
    <name type="scientific">Arabidopsis thaliana</name>
    <name type="common">Mouse-ear cress</name>
    <dbReference type="NCBI Taxonomy" id="3702"/>
</organismHost>
<organismHost>
    <name type="scientific">Brassica</name>
    <dbReference type="NCBI Taxonomy" id="3705"/>
</organismHost>
<organismHost>
    <name type="scientific">Raphanus</name>
    <dbReference type="NCBI Taxonomy" id="3725"/>
</organismHost>
<name>VAP_CAMVE</name>
<organism>
    <name type="scientific">Cauliflower mosaic virus (strain BBC)</name>
    <name type="common">CaMV</name>
    <dbReference type="NCBI Taxonomy" id="31556"/>
    <lineage>
        <taxon>Viruses</taxon>
        <taxon>Riboviria</taxon>
        <taxon>Pararnavirae</taxon>
        <taxon>Artverviricota</taxon>
        <taxon>Revtraviricetes</taxon>
        <taxon>Ortervirales</taxon>
        <taxon>Caulimoviridae</taxon>
        <taxon>Caulimovirus</taxon>
        <taxon>Caulimovirus tessellobrassicae</taxon>
    </lineage>
</organism>
<sequence length="129" mass="14140">MANLNQIQKEVSEILSDQKSMKSDIKAILELLGSQNPTKESLEAVAAKIVNDLTKLINDCPCNKEILEALGNQPKEQLIEQPKEKGKGLNLGKYSYPNYGVGNEELGSSGNPKALTWPFKAPAGWPNQF</sequence>
<dbReference type="EMBL" id="M90542">
    <property type="protein sequence ID" value="AAA62373.1"/>
    <property type="molecule type" value="Genomic_DNA"/>
</dbReference>
<dbReference type="SMR" id="Q02967"/>
<dbReference type="Proteomes" id="UP000008440">
    <property type="component" value="Genome"/>
</dbReference>
<dbReference type="GO" id="GO:0044219">
    <property type="term" value="C:host cell plasmodesma"/>
    <property type="evidence" value="ECO:0007669"/>
    <property type="project" value="UniProtKB-SubCell"/>
</dbReference>
<dbReference type="GO" id="GO:0044423">
    <property type="term" value="C:virion component"/>
    <property type="evidence" value="ECO:0007669"/>
    <property type="project" value="UniProtKB-KW"/>
</dbReference>
<dbReference type="GO" id="GO:0003677">
    <property type="term" value="F:DNA binding"/>
    <property type="evidence" value="ECO:0007669"/>
    <property type="project" value="InterPro"/>
</dbReference>
<dbReference type="Gene3D" id="6.10.250.630">
    <property type="match status" value="1"/>
</dbReference>
<dbReference type="InterPro" id="IPR004986">
    <property type="entry name" value="Caulimo_virion-assoc"/>
</dbReference>
<dbReference type="Pfam" id="PF03310">
    <property type="entry name" value="Cauli_DNA-bind"/>
    <property type="match status" value="1"/>
</dbReference>
<evidence type="ECO:0000250" key="1"/>
<evidence type="ECO:0000305" key="2"/>
<reference key="1">
    <citation type="journal article" date="1993" name="Gene">
        <title>The complete nucleotide sequence of cauliflower mosaic virus isolate BBC.</title>
        <authorList>
            <person name="Chenault K.D."/>
            <person name="Melcher U.K."/>
        </authorList>
    </citation>
    <scope>NUCLEOTIDE SEQUENCE [GENOMIC DNA]</scope>
</reference>